<evidence type="ECO:0000250" key="1"/>
<evidence type="ECO:0000305" key="2"/>
<sequence length="294" mass="33606">MVTGVFAALGFVVKELVFLVSYVKNNAFPQPLSSSEEKKYLELMAKGDEHARNMLIEHNLRLVAHIVKKFENTGEDAEDLISIGTIGLIKGIESYSAGKGTKLATYAARCIENEIVITKGGCIHPSLIRFNIYGVRIHNGNFFHDKVNNCFFIFKSMPPLFVMNNEILMHLRALKKTKKDVSLHDPIGQDKEGNEISLIDVLKSENEDVIDTIQLNMELEKVKQYIDILDDREKEVIVGRFGLDLKKEKTQREIAKELGISRSYVSRIEKRALMKMFHEFYRAEKEKRKKAKGK</sequence>
<gene>
    <name type="primary">sigK</name>
    <name type="synonym">cisB</name>
    <name type="synonym">spoIIIC</name>
    <name type="synonym">spoIVCB</name>
    <name type="ordered locus">BSU25760/BSU26390</name>
</gene>
<organism>
    <name type="scientific">Bacillus subtilis (strain 168)</name>
    <dbReference type="NCBI Taxonomy" id="224308"/>
    <lineage>
        <taxon>Bacteria</taxon>
        <taxon>Bacillati</taxon>
        <taxon>Bacillota</taxon>
        <taxon>Bacilli</taxon>
        <taxon>Bacillales</taxon>
        <taxon>Bacillaceae</taxon>
        <taxon>Bacillus</taxon>
    </lineage>
</organism>
<proteinExistence type="evidence at protein level"/>
<keyword id="KW-0002">3D-structure</keyword>
<keyword id="KW-0903">Direct protein sequencing</keyword>
<keyword id="KW-0238">DNA-binding</keyword>
<keyword id="KW-1185">Reference proteome</keyword>
<keyword id="KW-0731">Sigma factor</keyword>
<keyword id="KW-0749">Sporulation</keyword>
<keyword id="KW-0804">Transcription</keyword>
<keyword id="KW-0805">Transcription regulation</keyword>
<accession>P12254</accession>
<accession>P13802</accession>
<comment type="function">
    <text>Sigma factors are initiation factors that promote the attachment of RNA polymerase to specific initiation sites and are then released. This sigma factor is responsible for the expression of sporulation specific genes in the mother cell.</text>
</comment>
<comment type="interaction">
    <interactant intactId="EBI-15806052">
        <id>P12254</id>
    </interactant>
    <interactant intactId="EBI-15806037">
        <id>P26937</id>
        <label>spoIVFB</label>
    </interactant>
    <organismsDiffer>false</organismsDiffer>
    <experiments>2</experiments>
</comment>
<comment type="developmental stage">
    <text>DNA rearrangement occurs at the third hour of sporulation. Selectively expressed in the mother cell chamber of sporulating cells.</text>
</comment>
<comment type="miscellaneous">
    <text>The spoIVCB gene is an incomplete structural gene that is capable of encoding only the N-terminal half of sigma-K. The remainder of sigma-K is specified by another gene, spoIIIC, that is about 10 kb from spoIVCB on the chromosome. The intervening fragment, called skin, is excised at an intermediate stage of sporulation thus allowing a full coding gene to be produced.</text>
</comment>
<comment type="similarity">
    <text evidence="2">Belongs to the sigma-70 factor family.</text>
</comment>
<name>RPSK_BACSU</name>
<feature type="propeptide" id="PRO_0000032588">
    <location>
        <begin position="1"/>
        <end position="20"/>
    </location>
</feature>
<feature type="chain" id="PRO_0000032589" description="RNA polymerase sigma-K factor">
    <location>
        <begin position="21"/>
        <end position="294"/>
    </location>
</feature>
<feature type="DNA-binding region" description="H-T-H motif" evidence="1">
    <location>
        <begin position="251"/>
        <end position="270"/>
    </location>
</feature>
<feature type="region of interest" description="Encoded by spoIVCB">
    <location>
        <begin position="1"/>
        <end position="156"/>
    </location>
</feature>
<feature type="region of interest" description="Not present in recombined mature factor">
    <location>
        <begin position="114"/>
        <end position="165"/>
    </location>
</feature>
<feature type="region of interest" description="Encoded by spoIIIC">
    <location>
        <begin position="157"/>
        <end position="294"/>
    </location>
</feature>
<feature type="short sequence motif" description="Polymerase core binding">
    <location>
        <begin position="79"/>
        <end position="92"/>
    </location>
</feature>
<feature type="sequence conflict" description="In Ref. 1; AAA22804." evidence="2" ref="1">
    <location>
        <position position="2"/>
    </location>
</feature>
<feature type="sequence conflict" description="In Ref. 2; AAA22315 and 5; BAA12436." evidence="2" ref="2 5">
    <original>L</original>
    <variation>V</variation>
    <location>
        <position position="103"/>
    </location>
</feature>
<dbReference type="EMBL" id="M23103">
    <property type="protein sequence ID" value="AAA22804.1"/>
    <property type="molecule type" value="Genomic_DNA"/>
</dbReference>
<dbReference type="EMBL" id="M29040">
    <property type="protein sequence ID" value="AAA22315.1"/>
    <property type="molecule type" value="Genomic_DNA"/>
</dbReference>
<dbReference type="EMBL" id="M21657">
    <property type="protein sequence ID" value="AAA22803.1"/>
    <property type="molecule type" value="Genomic_DNA"/>
</dbReference>
<dbReference type="EMBL" id="M19299">
    <property type="protein sequence ID" value="AAA22805.1"/>
    <property type="molecule type" value="Genomic_DNA"/>
</dbReference>
<dbReference type="EMBL" id="D84432">
    <property type="protein sequence ID" value="BAA12436.1"/>
    <property type="molecule type" value="Genomic_DNA"/>
</dbReference>
<dbReference type="EMBL" id="D84432">
    <property type="protein sequence ID" value="BAA12375.1"/>
    <property type="molecule type" value="Genomic_DNA"/>
</dbReference>
<dbReference type="EMBL" id="D32216">
    <property type="protein sequence ID" value="BAA06914.1"/>
    <property type="molecule type" value="Genomic_DNA"/>
</dbReference>
<dbReference type="EMBL" id="AL009126">
    <property type="protein sequence ID" value="CAB14517.2"/>
    <property type="molecule type" value="Genomic_DNA"/>
</dbReference>
<dbReference type="EMBL" id="AL009126">
    <property type="protein sequence ID" value="CAB14580.1"/>
    <property type="molecule type" value="Genomic_DNA"/>
</dbReference>
<dbReference type="PIR" id="B43656">
    <property type="entry name" value="A55249"/>
</dbReference>
<dbReference type="PDB" id="8VJL">
    <property type="method" value="EM"/>
    <property type="resolution" value="3.50 A"/>
    <property type="chains" value="B/D/F/H=1-117"/>
</dbReference>
<dbReference type="PDB" id="8VJM">
    <property type="method" value="EM"/>
    <property type="resolution" value="4.00 A"/>
    <property type="chains" value="B/D=1-115"/>
</dbReference>
<dbReference type="PDBsum" id="8VJL"/>
<dbReference type="PDBsum" id="8VJM"/>
<dbReference type="EMDB" id="EMD-43289"/>
<dbReference type="SMR" id="P12254"/>
<dbReference type="DIP" id="DIP-48964N"/>
<dbReference type="FunCoup" id="P12254">
    <property type="interactions" value="4"/>
</dbReference>
<dbReference type="IntAct" id="P12254">
    <property type="interactions" value="1"/>
</dbReference>
<dbReference type="InParanoid" id="P12254"/>
<dbReference type="Proteomes" id="UP000001570">
    <property type="component" value="Chromosome"/>
</dbReference>
<dbReference type="GO" id="GO:0003677">
    <property type="term" value="F:DNA binding"/>
    <property type="evidence" value="ECO:0007669"/>
    <property type="project" value="UniProtKB-KW"/>
</dbReference>
<dbReference type="GO" id="GO:0016987">
    <property type="term" value="F:sigma factor activity"/>
    <property type="evidence" value="ECO:0007669"/>
    <property type="project" value="UniProtKB-KW"/>
</dbReference>
<dbReference type="GO" id="GO:0006352">
    <property type="term" value="P:DNA-templated transcription initiation"/>
    <property type="evidence" value="ECO:0007669"/>
    <property type="project" value="InterPro"/>
</dbReference>
<dbReference type="GO" id="GO:0030435">
    <property type="term" value="P:sporulation resulting in formation of a cellular spore"/>
    <property type="evidence" value="ECO:0007669"/>
    <property type="project" value="UniProtKB-KW"/>
</dbReference>
<dbReference type="CDD" id="cd06171">
    <property type="entry name" value="Sigma70_r4"/>
    <property type="match status" value="1"/>
</dbReference>
<dbReference type="FunFam" id="1.10.10.10:FF:000197">
    <property type="entry name" value="RNA polymerase sigma factor"/>
    <property type="match status" value="1"/>
</dbReference>
<dbReference type="FunFam" id="1.20.120.1810:FF:000003">
    <property type="entry name" value="RNA polymerase sigma factor"/>
    <property type="match status" value="1"/>
</dbReference>
<dbReference type="Gene3D" id="1.20.120.1810">
    <property type="match status" value="1"/>
</dbReference>
<dbReference type="Gene3D" id="1.20.140.160">
    <property type="match status" value="1"/>
</dbReference>
<dbReference type="InterPro" id="IPR001387">
    <property type="entry name" value="Cro/C1-type_HTH"/>
</dbReference>
<dbReference type="InterPro" id="IPR014284">
    <property type="entry name" value="RNA_pol_sigma-70_dom"/>
</dbReference>
<dbReference type="InterPro" id="IPR000943">
    <property type="entry name" value="RNA_pol_sigma70"/>
</dbReference>
<dbReference type="InterPro" id="IPR007627">
    <property type="entry name" value="RNA_pol_sigma70_r2"/>
</dbReference>
<dbReference type="InterPro" id="IPR007630">
    <property type="entry name" value="RNA_pol_sigma70_r4"/>
</dbReference>
<dbReference type="InterPro" id="IPR013325">
    <property type="entry name" value="RNA_pol_sigma_r2"/>
</dbReference>
<dbReference type="InterPro" id="IPR013324">
    <property type="entry name" value="RNA_pol_sigma_r3/r4-like"/>
</dbReference>
<dbReference type="InterPro" id="IPR050813">
    <property type="entry name" value="Sigma-70_Factor"/>
</dbReference>
<dbReference type="NCBIfam" id="TIGR02937">
    <property type="entry name" value="sigma70-ECF"/>
    <property type="match status" value="2"/>
</dbReference>
<dbReference type="PANTHER" id="PTHR30376:SF3">
    <property type="entry name" value="RNA POLYMERASE SIGMA FACTOR RPOH"/>
    <property type="match status" value="1"/>
</dbReference>
<dbReference type="PANTHER" id="PTHR30376">
    <property type="entry name" value="SIGMA FACTOR RPOH HEAT SHOCK RELATED"/>
    <property type="match status" value="1"/>
</dbReference>
<dbReference type="Pfam" id="PF04542">
    <property type="entry name" value="Sigma70_r2"/>
    <property type="match status" value="1"/>
</dbReference>
<dbReference type="Pfam" id="PF04545">
    <property type="entry name" value="Sigma70_r4"/>
    <property type="match status" value="1"/>
</dbReference>
<dbReference type="PIRSF" id="PIRSF000770">
    <property type="entry name" value="RNA_pol_sigma-SigE/K"/>
    <property type="match status" value="1"/>
</dbReference>
<dbReference type="PRINTS" id="PR00046">
    <property type="entry name" value="SIGMA70FCT"/>
</dbReference>
<dbReference type="SUPFAM" id="SSF88946">
    <property type="entry name" value="Sigma2 domain of RNA polymerase sigma factors"/>
    <property type="match status" value="1"/>
</dbReference>
<dbReference type="SUPFAM" id="SSF88659">
    <property type="entry name" value="Sigma3 and sigma4 domains of RNA polymerase sigma factors"/>
    <property type="match status" value="1"/>
</dbReference>
<dbReference type="PROSITE" id="PS00715">
    <property type="entry name" value="SIGMA70_1"/>
    <property type="match status" value="1"/>
</dbReference>
<dbReference type="PROSITE" id="PS00716">
    <property type="entry name" value="SIGMA70_2"/>
    <property type="match status" value="1"/>
</dbReference>
<protein>
    <recommendedName>
        <fullName>RNA polymerase sigma-K factor</fullName>
    </recommendedName>
    <alternativeName>
        <fullName>Sigma-27</fullName>
    </alternativeName>
    <alternativeName>
        <fullName>Stage IV sporulation protein CB</fullName>
    </alternativeName>
</protein>
<reference key="1">
    <citation type="journal article" date="1989" name="Science">
        <title>Chromosomal rearrangement generating a composite gene for a developmental transcription factor.</title>
        <authorList>
            <person name="Stragier P."/>
            <person name="Kunkel B."/>
            <person name="Kroos L."/>
            <person name="Losick R."/>
        </authorList>
    </citation>
    <scope>NUCLEOTIDE SEQUENCE [GENOMIC DNA] OF 1-156</scope>
</reference>
<reference key="2">
    <citation type="journal article" date="1990" name="J. Bacteriol.">
        <title>The cisA cistron of Bacillus subtilis sporulation gene spoIVC encodes a protein homologous to a site-specific recombinase.</title>
        <authorList>
            <person name="Sato T."/>
            <person name="Samori Y."/>
            <person name="Kobayashi Y."/>
        </authorList>
    </citation>
    <scope>NUCLEOTIDE SEQUENCE [GENOMIC DNA] OF 1-156</scope>
</reference>
<reference key="3">
    <citation type="journal article" date="1988" name="J. Bacteriol.">
        <title>The promoter for a sporulation gene in the spoIVC locus of Bacillus subtilis and its use in studies of temporal and spatial control of gene expression.</title>
        <authorList>
            <person name="Kunkel B."/>
            <person name="Sandman K."/>
            <person name="Panzer S."/>
            <person name="Youngman P."/>
            <person name="Losick R."/>
        </authorList>
    </citation>
    <scope>NUCLEOTIDE SEQUENCE [GENOMIC DNA] OF 1-43</scope>
</reference>
<reference key="4">
    <citation type="journal article" date="1988" name="J. Bacteriol.">
        <title>Transcriptional regulation and structure of the Bacillus subtilis sporulation locus spoIIIC.</title>
        <authorList>
            <person name="Errington J."/>
            <person name="Rong S."/>
            <person name="Rosenkrantz M.S."/>
            <person name="Sonenshein A.L."/>
        </authorList>
    </citation>
    <scope>NUCLEOTIDE SEQUENCE [GENOMIC DNA] OF 157-294</scope>
</reference>
<reference key="5">
    <citation type="journal article" date="1996" name="Microbiology">
        <title>Systematic sequencing of the 283 kb 210 degrees-232 degrees region of the Bacillus subtilis genome containing the skin element and many sporulation genes.</title>
        <authorList>
            <person name="Mizuno M."/>
            <person name="Masuda S."/>
            <person name="Takemaru K."/>
            <person name="Hosono S."/>
            <person name="Sato T."/>
            <person name="Takeuchi M."/>
            <person name="Kobayashi Y."/>
        </authorList>
    </citation>
    <scope>NUCLEOTIDE SEQUENCE [GENOMIC DNA] OF 1-156 AND 157-294</scope>
    <source>
        <strain>168 / JH642</strain>
    </source>
</reference>
<reference key="6">
    <citation type="journal article" date="1997" name="Nature">
        <title>The complete genome sequence of the Gram-positive bacterium Bacillus subtilis.</title>
        <authorList>
            <person name="Kunst F."/>
            <person name="Ogasawara N."/>
            <person name="Moszer I."/>
            <person name="Albertini A.M."/>
            <person name="Alloni G."/>
            <person name="Azevedo V."/>
            <person name="Bertero M.G."/>
            <person name="Bessieres P."/>
            <person name="Bolotin A."/>
            <person name="Borchert S."/>
            <person name="Borriss R."/>
            <person name="Boursier L."/>
            <person name="Brans A."/>
            <person name="Braun M."/>
            <person name="Brignell S.C."/>
            <person name="Bron S."/>
            <person name="Brouillet S."/>
            <person name="Bruschi C.V."/>
            <person name="Caldwell B."/>
            <person name="Capuano V."/>
            <person name="Carter N.M."/>
            <person name="Choi S.-K."/>
            <person name="Codani J.-J."/>
            <person name="Connerton I.F."/>
            <person name="Cummings N.J."/>
            <person name="Daniel R.A."/>
            <person name="Denizot F."/>
            <person name="Devine K.M."/>
            <person name="Duesterhoeft A."/>
            <person name="Ehrlich S.D."/>
            <person name="Emmerson P.T."/>
            <person name="Entian K.-D."/>
            <person name="Errington J."/>
            <person name="Fabret C."/>
            <person name="Ferrari E."/>
            <person name="Foulger D."/>
            <person name="Fritz C."/>
            <person name="Fujita M."/>
            <person name="Fujita Y."/>
            <person name="Fuma S."/>
            <person name="Galizzi A."/>
            <person name="Galleron N."/>
            <person name="Ghim S.-Y."/>
            <person name="Glaser P."/>
            <person name="Goffeau A."/>
            <person name="Golightly E.J."/>
            <person name="Grandi G."/>
            <person name="Guiseppi G."/>
            <person name="Guy B.J."/>
            <person name="Haga K."/>
            <person name="Haiech J."/>
            <person name="Harwood C.R."/>
            <person name="Henaut A."/>
            <person name="Hilbert H."/>
            <person name="Holsappel S."/>
            <person name="Hosono S."/>
            <person name="Hullo M.-F."/>
            <person name="Itaya M."/>
            <person name="Jones L.-M."/>
            <person name="Joris B."/>
            <person name="Karamata D."/>
            <person name="Kasahara Y."/>
            <person name="Klaerr-Blanchard M."/>
            <person name="Klein C."/>
            <person name="Kobayashi Y."/>
            <person name="Koetter P."/>
            <person name="Koningstein G."/>
            <person name="Krogh S."/>
            <person name="Kumano M."/>
            <person name="Kurita K."/>
            <person name="Lapidus A."/>
            <person name="Lardinois S."/>
            <person name="Lauber J."/>
            <person name="Lazarevic V."/>
            <person name="Lee S.-M."/>
            <person name="Levine A."/>
            <person name="Liu H."/>
            <person name="Masuda S."/>
            <person name="Mauel C."/>
            <person name="Medigue C."/>
            <person name="Medina N."/>
            <person name="Mellado R.P."/>
            <person name="Mizuno M."/>
            <person name="Moestl D."/>
            <person name="Nakai S."/>
            <person name="Noback M."/>
            <person name="Noone D."/>
            <person name="O'Reilly M."/>
            <person name="Ogawa K."/>
            <person name="Ogiwara A."/>
            <person name="Oudega B."/>
            <person name="Park S.-H."/>
            <person name="Parro V."/>
            <person name="Pohl T.M."/>
            <person name="Portetelle D."/>
            <person name="Porwollik S."/>
            <person name="Prescott A.M."/>
            <person name="Presecan E."/>
            <person name="Pujic P."/>
            <person name="Purnelle B."/>
            <person name="Rapoport G."/>
            <person name="Rey M."/>
            <person name="Reynolds S."/>
            <person name="Rieger M."/>
            <person name="Rivolta C."/>
            <person name="Rocha E."/>
            <person name="Roche B."/>
            <person name="Rose M."/>
            <person name="Sadaie Y."/>
            <person name="Sato T."/>
            <person name="Scanlan E."/>
            <person name="Schleich S."/>
            <person name="Schroeter R."/>
            <person name="Scoffone F."/>
            <person name="Sekiguchi J."/>
            <person name="Sekowska A."/>
            <person name="Seror S.J."/>
            <person name="Serror P."/>
            <person name="Shin B.-S."/>
            <person name="Soldo B."/>
            <person name="Sorokin A."/>
            <person name="Tacconi E."/>
            <person name="Takagi T."/>
            <person name="Takahashi H."/>
            <person name="Takemaru K."/>
            <person name="Takeuchi M."/>
            <person name="Tamakoshi A."/>
            <person name="Tanaka T."/>
            <person name="Terpstra P."/>
            <person name="Tognoni A."/>
            <person name="Tosato V."/>
            <person name="Uchiyama S."/>
            <person name="Vandenbol M."/>
            <person name="Vannier F."/>
            <person name="Vassarotti A."/>
            <person name="Viari A."/>
            <person name="Wambutt R."/>
            <person name="Wedler E."/>
            <person name="Wedler H."/>
            <person name="Weitzenegger T."/>
            <person name="Winters P."/>
            <person name="Wipat A."/>
            <person name="Yamamoto H."/>
            <person name="Yamane K."/>
            <person name="Yasumoto K."/>
            <person name="Yata K."/>
            <person name="Yoshida K."/>
            <person name="Yoshikawa H.-F."/>
            <person name="Zumstein E."/>
            <person name="Yoshikawa H."/>
            <person name="Danchin A."/>
        </authorList>
    </citation>
    <scope>NUCLEOTIDE SEQUENCE [LARGE SCALE GENOMIC DNA] OF 1-156 AND 157-294</scope>
    <source>
        <strain>168</strain>
    </source>
</reference>
<reference key="7">
    <citation type="journal article" date="2009" name="Microbiology">
        <title>From a consortium sequence to a unified sequence: the Bacillus subtilis 168 reference genome a decade later.</title>
        <authorList>
            <person name="Barbe V."/>
            <person name="Cruveiller S."/>
            <person name="Kunst F."/>
            <person name="Lenoble P."/>
            <person name="Meurice G."/>
            <person name="Sekowska A."/>
            <person name="Vallenet D."/>
            <person name="Wang T."/>
            <person name="Moszer I."/>
            <person name="Medigue C."/>
            <person name="Danchin A."/>
        </authorList>
    </citation>
    <scope>SEQUENCE REVISION TO 103</scope>
</reference>
<reference key="8">
    <citation type="journal article" date="1989" name="Science">
        <title>Switch protein alters specificity of RNA polymerase containing a compartment-specific sigma factor.</title>
        <authorList>
            <person name="Kroos L."/>
            <person name="Kunkel B."/>
            <person name="Losick R."/>
        </authorList>
    </citation>
    <scope>PROTEIN SEQUENCE OF 22-34</scope>
</reference>